<accession>P41832</accession>
<accession>D6W0S3</accession>
<accession>O13450</accession>
<comment type="function">
    <text evidence="7 8">Required for the assembly of F-actin structures, such as actin cables and stress fibers. Nucleates actin filaments. Binds to the barbed end of the actin filament and acts as a leaky capper, slowing both polymerization and depolymerization. Protects the growing actin fiber from tight capping proteins and so increases the time of elongation and the total amount of F-actin. May organize microtubules by mediating spindle positioning and movement in the budding process. Potential target of the RHO family members.</text>
</comment>
<comment type="subunit">
    <text evidence="10">Homodimer, and possibly also homotetramer. Interacts with PFY1 via the FH1 domain and with actin via the FH2 domain.</text>
</comment>
<comment type="interaction">
    <interactant intactId="EBI-3692">
        <id>P41832</id>
    </interactant>
    <interactant intactId="EBI-3692">
        <id>P41832</id>
        <label>BNI1</label>
    </interactant>
    <organismsDiffer>false</organismsDiffer>
    <experiments>3</experiments>
</comment>
<comment type="interaction">
    <interactant intactId="EBI-3692">
        <id>P41832</id>
    </interactant>
    <interactant intactId="EBI-11670">
        <id>P36006</id>
        <label>MYO3</label>
    </interactant>
    <organismsDiffer>false</organismsDiffer>
    <experiments>3</experiments>
</comment>
<comment type="interaction">
    <interactant intactId="EBI-3692">
        <id>P41832</id>
    </interactant>
    <interactant intactId="EBI-3058728">
        <id>P68139</id>
        <label>ACTA1</label>
    </interactant>
    <organismsDiffer>true</organismsDiffer>
    <experiments>2</experiments>
</comment>
<comment type="subcellular location">
    <subcellularLocation>
        <location>Cell membrane</location>
    </subcellularLocation>
    <subcellularLocation>
        <location>Cell projection</location>
        <location>Ruffle membrane</location>
    </subcellularLocation>
    <subcellularLocation>
        <location>Cytoplasm</location>
        <location>Cytoskeleton</location>
    </subcellularLocation>
</comment>
<comment type="domain">
    <text evidence="1">The DAD domain regulates activation via by an autoinhibitory interaction with the GBD/FH3 domain. This autoinhibition is released upon competitive binding of an activated GTPase. The release of DAD allows the FH2 domain to then nucleate and elongate nonbranched actin filaments (By similarity).</text>
</comment>
<comment type="miscellaneous">
    <text>Each FH2 dimer contains binding sites for 4 actin molecules.</text>
</comment>
<comment type="miscellaneous">
    <text evidence="9">Present with 166 molecules/cell in log phase SD medium.</text>
</comment>
<comment type="similarity">
    <text evidence="11">Belongs to the formin homology family. BNI1 subfamily.</text>
</comment>
<protein>
    <recommendedName>
        <fullName>Protein BNI1</fullName>
    </recommendedName>
    <alternativeName>
        <fullName>Pointed projection formation protein 3</fullName>
    </alternativeName>
    <alternativeName>
        <fullName>Sensitive to high expression protein 5</fullName>
    </alternativeName>
    <alternativeName>
        <fullName>Synthetic lethal 39</fullName>
    </alternativeName>
</protein>
<reference key="1">
    <citation type="submission" date="1994-04" db="EMBL/GenBank/DDBJ databases">
        <title>Synthetic lethals of CDC12.</title>
        <authorList>
            <person name="Fares H.F."/>
            <person name="Pringle J.R."/>
        </authorList>
    </citation>
    <scope>NUCLEOTIDE SEQUENCE [GENOMIC DNA]</scope>
</reference>
<reference key="2">
    <citation type="journal article" date="1994" name="Yeast">
        <title>Saccharomyces cerevisiae MATa mutant cells defective in pointed projection formation in response to alpha-factor at high concentrations.</title>
        <authorList>
            <person name="Yorihuzi T."/>
            <person name="Ohsumi Y."/>
        </authorList>
    </citation>
    <scope>NUCLEOTIDE SEQUENCE [GENOMIC DNA]</scope>
    <source>
        <strain>ATCC 26109 / X2180</strain>
    </source>
</reference>
<reference key="3">
    <citation type="journal article" date="1997" name="Nature">
        <title>The nucleotide sequence of Saccharomyces cerevisiae chromosome XIV and its evolutionary implications.</title>
        <authorList>
            <person name="Philippsen P."/>
            <person name="Kleine K."/>
            <person name="Poehlmann R."/>
            <person name="Duesterhoeft A."/>
            <person name="Hamberg K."/>
            <person name="Hegemann J.H."/>
            <person name="Obermaier B."/>
            <person name="Urrestarazu L.A."/>
            <person name="Aert R."/>
            <person name="Albermann K."/>
            <person name="Altmann R."/>
            <person name="Andre B."/>
            <person name="Baladron V."/>
            <person name="Ballesta J.P.G."/>
            <person name="Becam A.-M."/>
            <person name="Beinhauer J.D."/>
            <person name="Boskovic J."/>
            <person name="Buitrago M.J."/>
            <person name="Bussereau F."/>
            <person name="Coster F."/>
            <person name="Crouzet M."/>
            <person name="D'Angelo M."/>
            <person name="Dal Pero F."/>
            <person name="De Antoni A."/>
            <person name="del Rey F."/>
            <person name="Doignon F."/>
            <person name="Domdey H."/>
            <person name="Dubois E."/>
            <person name="Fiedler T.A."/>
            <person name="Fleig U."/>
            <person name="Floeth M."/>
            <person name="Fritz C."/>
            <person name="Gaillardin C."/>
            <person name="Garcia-Cantalejo J.M."/>
            <person name="Glansdorff N."/>
            <person name="Goffeau A."/>
            <person name="Gueldener U."/>
            <person name="Herbert C.J."/>
            <person name="Heumann K."/>
            <person name="Heuss-Neitzel D."/>
            <person name="Hilbert H."/>
            <person name="Hinni K."/>
            <person name="Iraqui Houssaini I."/>
            <person name="Jacquet M."/>
            <person name="Jimenez A."/>
            <person name="Jonniaux J.-L."/>
            <person name="Karpfinger-Hartl L."/>
            <person name="Lanfranchi G."/>
            <person name="Lepingle A."/>
            <person name="Levesque H."/>
            <person name="Lyck R."/>
            <person name="Maftahi M."/>
            <person name="Mallet L."/>
            <person name="Maurer C.T.C."/>
            <person name="Messenguy F."/>
            <person name="Mewes H.-W."/>
            <person name="Moestl D."/>
            <person name="Nasr F."/>
            <person name="Nicaud J.-M."/>
            <person name="Niedenthal R.K."/>
            <person name="Pandolfo D."/>
            <person name="Pierard A."/>
            <person name="Piravandi E."/>
            <person name="Planta R.J."/>
            <person name="Pohl T.M."/>
            <person name="Purnelle B."/>
            <person name="Rebischung C."/>
            <person name="Remacha M.A."/>
            <person name="Revuelta J.L."/>
            <person name="Rinke M."/>
            <person name="Saiz J.E."/>
            <person name="Sartorello F."/>
            <person name="Scherens B."/>
            <person name="Sen-Gupta M."/>
            <person name="Soler-Mira A."/>
            <person name="Urbanus J.H.M."/>
            <person name="Valle G."/>
            <person name="Van Dyck L."/>
            <person name="Verhasselt P."/>
            <person name="Vierendeels F."/>
            <person name="Vissers S."/>
            <person name="Voet M."/>
            <person name="Volckaert G."/>
            <person name="Wach A."/>
            <person name="Wambutt R."/>
            <person name="Wedler H."/>
            <person name="Zollner A."/>
            <person name="Hani J."/>
        </authorList>
    </citation>
    <scope>NUCLEOTIDE SEQUENCE [LARGE SCALE GENOMIC DNA]</scope>
    <source>
        <strain>ATCC 204508 / S288c</strain>
    </source>
</reference>
<reference key="4">
    <citation type="journal article" date="2014" name="G3 (Bethesda)">
        <title>The reference genome sequence of Saccharomyces cerevisiae: Then and now.</title>
        <authorList>
            <person name="Engel S.R."/>
            <person name="Dietrich F.S."/>
            <person name="Fisk D.G."/>
            <person name="Binkley G."/>
            <person name="Balakrishnan R."/>
            <person name="Costanzo M.C."/>
            <person name="Dwight S.S."/>
            <person name="Hitz B.C."/>
            <person name="Karra K."/>
            <person name="Nash R.S."/>
            <person name="Weng S."/>
            <person name="Wong E.D."/>
            <person name="Lloyd P."/>
            <person name="Skrzypek M.S."/>
            <person name="Miyasato S.R."/>
            <person name="Simison M."/>
            <person name="Cherry J.M."/>
        </authorList>
    </citation>
    <scope>GENOME REANNOTATION</scope>
    <scope>SEQUENCE REVISION TO 938</scope>
    <source>
        <strain>ATCC 204508 / S288c</strain>
    </source>
</reference>
<reference key="5">
    <citation type="journal article" date="1996" name="Yeast">
        <title>The sequence of a 24,152 bp segment from the left arm of chromosome XIV from Saccharomyces cerevisiae between the BNI1 and the POL2 genes.</title>
        <authorList>
            <person name="Sen-Gupta M."/>
            <person name="Lyck R."/>
            <person name="Fleig U."/>
            <person name="Niedenthal R.K."/>
            <person name="Hegemann J.H."/>
        </authorList>
    </citation>
    <scope>NUCLEOTIDE SEQUENCE [GENOMIC DNA] OF 1-1553</scope>
    <source>
        <strain>ATCC 96604 / S288c / FY1679</strain>
    </source>
</reference>
<reference key="6">
    <citation type="journal article" date="1999" name="J. Cell Biol.">
        <title>Control of mitotic spindle position by the Saccharomyces cerevisiae formin Bni1p.</title>
        <authorList>
            <person name="Lee L."/>
            <person name="Klee S.K."/>
            <person name="Evangelista M."/>
            <person name="Boone C."/>
            <person name="Pellman D."/>
        </authorList>
    </citation>
    <scope>FUNCTION</scope>
</reference>
<reference key="7">
    <citation type="journal article" date="2003" name="Curr. Biol.">
        <title>Formin leaky cap allows elongation in the presence of tight capping proteins.</title>
        <authorList>
            <person name="Zigmond S.H."/>
            <person name="Evangelista M."/>
            <person name="Boone C."/>
            <person name="Yang C."/>
            <person name="Dar A.C."/>
            <person name="Sicheri F."/>
            <person name="Forkey J."/>
            <person name="Pring M."/>
        </authorList>
    </citation>
    <scope>FUNCTION</scope>
    <scope>TETRAMERIZATION</scope>
</reference>
<reference key="8">
    <citation type="journal article" date="2003" name="Nature">
        <title>Global analysis of protein expression in yeast.</title>
        <authorList>
            <person name="Ghaemmaghami S."/>
            <person name="Huh W.-K."/>
            <person name="Bower K."/>
            <person name="Howson R.W."/>
            <person name="Belle A."/>
            <person name="Dephoure N."/>
            <person name="O'Shea E.K."/>
            <person name="Weissman J.S."/>
        </authorList>
    </citation>
    <scope>LEVEL OF PROTEIN EXPRESSION [LARGE SCALE ANALYSIS]</scope>
</reference>
<reference key="9">
    <citation type="journal article" date="2007" name="J. Proteome Res.">
        <title>Large-scale phosphorylation analysis of alpha-factor-arrested Saccharomyces cerevisiae.</title>
        <authorList>
            <person name="Li X."/>
            <person name="Gerber S.A."/>
            <person name="Rudner A.D."/>
            <person name="Beausoleil S.A."/>
            <person name="Haas W."/>
            <person name="Villen J."/>
            <person name="Elias J.E."/>
            <person name="Gygi S.P."/>
        </authorList>
    </citation>
    <scope>PHOSPHORYLATION [LARGE SCALE ANALYSIS] AT SER-311; SER-1170; SER-1338 AND SER-1344</scope>
    <scope>IDENTIFICATION BY MASS SPECTROMETRY [LARGE SCALE ANALYSIS]</scope>
    <source>
        <strain>ADR376</strain>
    </source>
</reference>
<reference key="10">
    <citation type="journal article" date="2008" name="Mol. Cell. Proteomics">
        <title>A multidimensional chromatography technology for in-depth phosphoproteome analysis.</title>
        <authorList>
            <person name="Albuquerque C.P."/>
            <person name="Smolka M.B."/>
            <person name="Payne S.H."/>
            <person name="Bafna V."/>
            <person name="Eng J."/>
            <person name="Zhou H."/>
        </authorList>
    </citation>
    <scope>PHOSPHORYLATION [LARGE SCALE ANALYSIS] AT SER-311 AND SER-1170</scope>
    <scope>IDENTIFICATION BY MASS SPECTROMETRY [LARGE SCALE ANALYSIS]</scope>
</reference>
<reference key="11">
    <citation type="journal article" date="2009" name="Science">
        <title>Global analysis of Cdk1 substrate phosphorylation sites provides insights into evolution.</title>
        <authorList>
            <person name="Holt L.J."/>
            <person name="Tuch B.B."/>
            <person name="Villen J."/>
            <person name="Johnson A.D."/>
            <person name="Gygi S.P."/>
            <person name="Morgan D.O."/>
        </authorList>
    </citation>
    <scope>PHOSPHORYLATION [LARGE SCALE ANALYSIS] AT SER-325; SER-1085; SER-1170 AND THR-1918</scope>
    <scope>IDENTIFICATION BY MASS SPECTROMETRY [LARGE SCALE ANALYSIS]</scope>
</reference>
<reference key="12">
    <citation type="journal article" date="2004" name="Cell">
        <title>Crystal structures of a formin homology-2 domain reveal a tethered dimer architecture.</title>
        <authorList>
            <person name="Xu Y."/>
            <person name="Moseley J.B."/>
            <person name="Sagot I."/>
            <person name="Poy F."/>
            <person name="Pellman D."/>
            <person name="Goode B.L."/>
            <person name="Eck M.J."/>
        </authorList>
    </citation>
    <scope>X-RAY CRYSTALLOGRAPHY (2.5 ANGSTROMS) OF 1350-1760</scope>
    <scope>DIMERIZATION</scope>
</reference>
<reference key="13">
    <citation type="journal article" date="2005" name="Nature">
        <title>Structural basis of actin filament nucleation and processive capping by a formin homology 2 domain.</title>
        <authorList>
            <person name="Otomo T."/>
            <person name="Tomchick D.R."/>
            <person name="Otomo C."/>
            <person name="Panchal S.C."/>
            <person name="Machius M."/>
            <person name="Rosen M.K."/>
        </authorList>
    </citation>
    <scope>X-RAY CRYSTALLOGRAPHY (3.05 ANGSTROMS) OF 1327-1769 IN COMPLEX WITH ATP AND ACTIN</scope>
</reference>
<feature type="chain" id="PRO_0000194899" description="Protein BNI1">
    <location>
        <begin position="1"/>
        <end position="1953"/>
    </location>
</feature>
<feature type="domain" description="GBD/FH3" evidence="4">
    <location>
        <begin position="174"/>
        <end position="696"/>
    </location>
</feature>
<feature type="domain" description="FH1">
    <location>
        <begin position="1053"/>
        <end position="1337"/>
    </location>
</feature>
<feature type="domain" description="FH2" evidence="5">
    <location>
        <begin position="1348"/>
        <end position="1766"/>
    </location>
</feature>
<feature type="domain" description="DAD" evidence="3">
    <location>
        <begin position="1792"/>
        <end position="1826"/>
    </location>
</feature>
<feature type="region of interest" description="Disordered" evidence="6">
    <location>
        <begin position="1"/>
        <end position="152"/>
    </location>
</feature>
<feature type="region of interest" description="Disordered" evidence="6">
    <location>
        <begin position="230"/>
        <end position="258"/>
    </location>
</feature>
<feature type="region of interest" description="Disordered" evidence="6">
    <location>
        <begin position="263"/>
        <end position="282"/>
    </location>
</feature>
<feature type="region of interest" description="Disordered" evidence="6">
    <location>
        <begin position="287"/>
        <end position="306"/>
    </location>
</feature>
<feature type="region of interest" description="Disordered" evidence="6">
    <location>
        <begin position="312"/>
        <end position="337"/>
    </location>
</feature>
<feature type="region of interest" description="Disordered" evidence="6">
    <location>
        <begin position="990"/>
        <end position="1014"/>
    </location>
</feature>
<feature type="region of interest" description="Disordered" evidence="6">
    <location>
        <begin position="1040"/>
        <end position="1094"/>
    </location>
</feature>
<feature type="region of interest" description="Disordered" evidence="6">
    <location>
        <begin position="1149"/>
        <end position="1330"/>
    </location>
</feature>
<feature type="region of interest" description="Disordered" evidence="6">
    <location>
        <begin position="1768"/>
        <end position="1797"/>
    </location>
</feature>
<feature type="region of interest" description="Disordered" evidence="6">
    <location>
        <begin position="1809"/>
        <end position="1844"/>
    </location>
</feature>
<feature type="region of interest" description="Disordered" evidence="6">
    <location>
        <begin position="1872"/>
        <end position="1899"/>
    </location>
</feature>
<feature type="coiled-coil region" evidence="2">
    <location>
        <begin position="712"/>
        <end position="807"/>
    </location>
</feature>
<feature type="coiled-coil region" evidence="2">
    <location>
        <begin position="864"/>
        <end position="894"/>
    </location>
</feature>
<feature type="coiled-coil region" evidence="2">
    <location>
        <begin position="928"/>
        <end position="981"/>
    </location>
</feature>
<feature type="coiled-coil region" evidence="2">
    <location>
        <begin position="1732"/>
        <end position="1811"/>
    </location>
</feature>
<feature type="compositionally biased region" description="Low complexity" evidence="6">
    <location>
        <begin position="31"/>
        <end position="40"/>
    </location>
</feature>
<feature type="compositionally biased region" description="Polar residues" evidence="6">
    <location>
        <begin position="41"/>
        <end position="100"/>
    </location>
</feature>
<feature type="compositionally biased region" description="Polar residues" evidence="6">
    <location>
        <begin position="110"/>
        <end position="143"/>
    </location>
</feature>
<feature type="compositionally biased region" description="Low complexity" evidence="6">
    <location>
        <begin position="232"/>
        <end position="246"/>
    </location>
</feature>
<feature type="compositionally biased region" description="Polar residues" evidence="6">
    <location>
        <begin position="263"/>
        <end position="278"/>
    </location>
</feature>
<feature type="compositionally biased region" description="Basic and acidic residues" evidence="6">
    <location>
        <begin position="1184"/>
        <end position="1211"/>
    </location>
</feature>
<feature type="compositionally biased region" description="Polar residues" evidence="6">
    <location>
        <begin position="1217"/>
        <end position="1237"/>
    </location>
</feature>
<feature type="compositionally biased region" description="Pro residues" evidence="6">
    <location>
        <begin position="1238"/>
        <end position="1250"/>
    </location>
</feature>
<feature type="compositionally biased region" description="Basic and acidic residues" evidence="6">
    <location>
        <begin position="1257"/>
        <end position="1270"/>
    </location>
</feature>
<feature type="compositionally biased region" description="Pro residues" evidence="6">
    <location>
        <begin position="1278"/>
        <end position="1292"/>
    </location>
</feature>
<feature type="compositionally biased region" description="Basic and acidic residues" evidence="6">
    <location>
        <begin position="1768"/>
        <end position="1779"/>
    </location>
</feature>
<feature type="compositionally biased region" description="Basic residues" evidence="6">
    <location>
        <begin position="1821"/>
        <end position="1830"/>
    </location>
</feature>
<feature type="compositionally biased region" description="Polar residues" evidence="6">
    <location>
        <begin position="1880"/>
        <end position="1896"/>
    </location>
</feature>
<feature type="modified residue" description="Phosphoserine" evidence="12 13">
    <location>
        <position position="311"/>
    </location>
</feature>
<feature type="modified residue" description="Phosphoserine" evidence="14">
    <location>
        <position position="325"/>
    </location>
</feature>
<feature type="modified residue" description="Phosphoserine" evidence="14">
    <location>
        <position position="1085"/>
    </location>
</feature>
<feature type="modified residue" description="Phosphoserine" evidence="12 13 14">
    <location>
        <position position="1170"/>
    </location>
</feature>
<feature type="modified residue" description="Phosphoserine" evidence="12">
    <location>
        <position position="1338"/>
    </location>
</feature>
<feature type="modified residue" description="Phosphoserine" evidence="12">
    <location>
        <position position="1344"/>
    </location>
</feature>
<feature type="modified residue" description="Phosphothreonine" evidence="14">
    <location>
        <position position="1918"/>
    </location>
</feature>
<feature type="sequence conflict" description="In Ref. 3; CAA96178/CAA96179 and 5; CAA63225." evidence="11" ref="3 5">
    <original>A</original>
    <variation>T</variation>
    <location>
        <position position="938"/>
    </location>
</feature>
<feature type="sequence conflict" description="In Ref. 1; AAA34455." evidence="11" ref="1">
    <original>G</original>
    <variation>C</variation>
    <location>
        <position position="1430"/>
    </location>
</feature>
<feature type="strand" evidence="16">
    <location>
        <begin position="1371"/>
        <end position="1373"/>
    </location>
</feature>
<feature type="helix" evidence="16">
    <location>
        <begin position="1378"/>
        <end position="1388"/>
    </location>
</feature>
<feature type="helix" evidence="16">
    <location>
        <begin position="1391"/>
        <end position="1398"/>
    </location>
</feature>
<feature type="strand" evidence="16">
    <location>
        <begin position="1400"/>
        <end position="1402"/>
    </location>
</feature>
<feature type="helix" evidence="16">
    <location>
        <begin position="1405"/>
        <end position="1413"/>
    </location>
</feature>
<feature type="turn" evidence="16">
    <location>
        <begin position="1414"/>
        <end position="1416"/>
    </location>
</feature>
<feature type="helix" evidence="16">
    <location>
        <begin position="1423"/>
        <end position="1432"/>
    </location>
</feature>
<feature type="helix" evidence="16">
    <location>
        <begin position="1434"/>
        <end position="1436"/>
    </location>
</feature>
<feature type="helix" evidence="16">
    <location>
        <begin position="1441"/>
        <end position="1449"/>
    </location>
</feature>
<feature type="turn" evidence="16">
    <location>
        <begin position="1450"/>
        <end position="1452"/>
    </location>
</feature>
<feature type="helix" evidence="16">
    <location>
        <begin position="1453"/>
        <end position="1456"/>
    </location>
</feature>
<feature type="helix" evidence="16">
    <location>
        <begin position="1459"/>
        <end position="1464"/>
    </location>
</feature>
<feature type="helix" evidence="16">
    <location>
        <begin position="1468"/>
        <end position="1471"/>
    </location>
</feature>
<feature type="helix" evidence="16">
    <location>
        <begin position="1475"/>
        <end position="1480"/>
    </location>
</feature>
<feature type="helix" evidence="16">
    <location>
        <begin position="1482"/>
        <end position="1484"/>
    </location>
</feature>
<feature type="helix" evidence="16">
    <location>
        <begin position="1494"/>
        <end position="1496"/>
    </location>
</feature>
<feature type="helix" evidence="17">
    <location>
        <begin position="1504"/>
        <end position="1506"/>
    </location>
</feature>
<feature type="helix" evidence="16">
    <location>
        <begin position="1509"/>
        <end position="1516"/>
    </location>
</feature>
<feature type="turn" evidence="16">
    <location>
        <begin position="1517"/>
        <end position="1524"/>
    </location>
</feature>
<feature type="helix" evidence="16">
    <location>
        <begin position="1525"/>
        <end position="1535"/>
    </location>
</feature>
<feature type="helix" evidence="16">
    <location>
        <begin position="1538"/>
        <end position="1560"/>
    </location>
</feature>
<feature type="helix" evidence="16">
    <location>
        <begin position="1563"/>
        <end position="1579"/>
    </location>
</feature>
<feature type="helix" evidence="16">
    <location>
        <begin position="1582"/>
        <end position="1584"/>
    </location>
</feature>
<feature type="helix" evidence="16">
    <location>
        <begin position="1591"/>
        <end position="1596"/>
    </location>
</feature>
<feature type="strand" evidence="16">
    <location>
        <begin position="1597"/>
        <end position="1599"/>
    </location>
</feature>
<feature type="strand" evidence="15">
    <location>
        <begin position="1603"/>
        <end position="1608"/>
    </location>
</feature>
<feature type="helix" evidence="16">
    <location>
        <begin position="1609"/>
        <end position="1620"/>
    </location>
</feature>
<feature type="helix" evidence="16">
    <location>
        <begin position="1622"/>
        <end position="1626"/>
    </location>
</feature>
<feature type="helix" evidence="16">
    <location>
        <begin position="1627"/>
        <end position="1630"/>
    </location>
</feature>
<feature type="helix" evidence="16">
    <location>
        <begin position="1632"/>
        <end position="1637"/>
    </location>
</feature>
<feature type="helix" evidence="16">
    <location>
        <begin position="1642"/>
        <end position="1665"/>
    </location>
</feature>
<feature type="turn" evidence="16">
    <location>
        <begin position="1667"/>
        <end position="1669"/>
    </location>
</feature>
<feature type="turn" evidence="17">
    <location>
        <begin position="1671"/>
        <end position="1673"/>
    </location>
</feature>
<feature type="helix" evidence="16">
    <location>
        <begin position="1680"/>
        <end position="1715"/>
    </location>
</feature>
<feature type="strand" evidence="17">
    <location>
        <begin position="1720"/>
        <end position="1722"/>
    </location>
</feature>
<feature type="helix" evidence="16">
    <location>
        <begin position="1723"/>
        <end position="1757"/>
    </location>
</feature>
<organism>
    <name type="scientific">Saccharomyces cerevisiae (strain ATCC 204508 / S288c)</name>
    <name type="common">Baker's yeast</name>
    <dbReference type="NCBI Taxonomy" id="559292"/>
    <lineage>
        <taxon>Eukaryota</taxon>
        <taxon>Fungi</taxon>
        <taxon>Dikarya</taxon>
        <taxon>Ascomycota</taxon>
        <taxon>Saccharomycotina</taxon>
        <taxon>Saccharomycetes</taxon>
        <taxon>Saccharomycetales</taxon>
        <taxon>Saccharomycetaceae</taxon>
        <taxon>Saccharomyces</taxon>
    </lineage>
</organism>
<name>BNI1_YEAST</name>
<gene>
    <name type="primary">BNI1</name>
    <name type="synonym">PPF3</name>
    <name type="synonym">SHE5</name>
    <name type="ordered locus">YNL271C</name>
    <name type="ORF">N0646</name>
</gene>
<evidence type="ECO:0000250" key="1"/>
<evidence type="ECO:0000255" key="2"/>
<evidence type="ECO:0000255" key="3">
    <source>
        <dbReference type="PROSITE-ProRule" id="PRU00577"/>
    </source>
</evidence>
<evidence type="ECO:0000255" key="4">
    <source>
        <dbReference type="PROSITE-ProRule" id="PRU00579"/>
    </source>
</evidence>
<evidence type="ECO:0000255" key="5">
    <source>
        <dbReference type="PROSITE-ProRule" id="PRU00774"/>
    </source>
</evidence>
<evidence type="ECO:0000256" key="6">
    <source>
        <dbReference type="SAM" id="MobiDB-lite"/>
    </source>
</evidence>
<evidence type="ECO:0000269" key="7">
    <source>
    </source>
</evidence>
<evidence type="ECO:0000269" key="8">
    <source>
    </source>
</evidence>
<evidence type="ECO:0000269" key="9">
    <source>
    </source>
</evidence>
<evidence type="ECO:0000269" key="10">
    <source>
    </source>
</evidence>
<evidence type="ECO:0000305" key="11"/>
<evidence type="ECO:0007744" key="12">
    <source>
    </source>
</evidence>
<evidence type="ECO:0007744" key="13">
    <source>
    </source>
</evidence>
<evidence type="ECO:0007744" key="14">
    <source>
    </source>
</evidence>
<evidence type="ECO:0007829" key="15">
    <source>
        <dbReference type="PDB" id="1UX4"/>
    </source>
</evidence>
<evidence type="ECO:0007829" key="16">
    <source>
        <dbReference type="PDB" id="1UX5"/>
    </source>
</evidence>
<evidence type="ECO:0007829" key="17">
    <source>
        <dbReference type="PDB" id="1Y64"/>
    </source>
</evidence>
<keyword id="KW-0002">3D-structure</keyword>
<keyword id="KW-0009">Actin-binding</keyword>
<keyword id="KW-1003">Cell membrane</keyword>
<keyword id="KW-0966">Cell projection</keyword>
<keyword id="KW-0175">Coiled coil</keyword>
<keyword id="KW-0963">Cytoplasm</keyword>
<keyword id="KW-0206">Cytoskeleton</keyword>
<keyword id="KW-0472">Membrane</keyword>
<keyword id="KW-0597">Phosphoprotein</keyword>
<keyword id="KW-1185">Reference proteome</keyword>
<sequence length="1953" mass="219673">MLKNSGSKHSNSKESHSNSSSGIFQNLKRLANSNATNSNTGSPTYASQQQHSPVGNEVSTSPASSSSFRKLNAPSRSTSTEARPLNKKSTLNTQNLSQYMNGKLSGDVPVSSQHARSHSMQSKYSYSKRNSSQASNKLTRQHTGQSHSASSLLSQGSLTNLSKFTTPDGKIYLEMPSDPYEVEVLFEDIMYKRNIFQSLSEDKQEALMGYSIEKKWLIVKQDLQNELKKMRANTTSSSTASRTSMASDHHPILTANSSLSSPKSVLMTSASSPTSTVYSNSLNHSTTLSSVGTSTSKGKKLVSGSLKKQPSLNNIYRGGAENNTSASTLPGDRTNRPPIHYVQRILADKLTSDEMKDLWVTLRTEQLDWVDAFIDHQGHIAMANVLMNSIYKTAPRENLTKELLEKENSFFKCFRVLSMLSQGLYEFSTHRLMTDTVAEGLFSTKLATRKMATEIFVCMLEKKNKSRFEAVLTSLDKKFRIGQNLHMIQNFKKMPQYFSHLTLESHLKIIQAWLFAVEQTLDGRGKMGSLVGASDEFKNGGGENAILEYCQWTMVFINHLCSCSDNINQRMLLRTKLENCGILRIMNKIKLLDYDKVIDQIELYDNNKLDDFNVKLEANNKAFNVDLHDPLSLLKNLWDICKGTENEKLLVSLVQHLFLSSSKLIEENQNSSKLTKQLKLMDSLVTNVSVASTSDEETNMNMAIQRLYDAMQTDEVARRAILESRALTKKLEEIQAERDSLSEKLSKAEHGLVGQLEDELHERDRILAKNQRVMQQLEAELEELKKKHLLEKHQQEVELRKMLTILNSRPEESFNKNEGTRGMNSSLNSSEKANIQKVLQDGLSRAKKDYKDDSKKFGMTLQPNKRLKMLRMQMENIENEARQLEMTNFAEFEKDRLEPPIHIKKPKVKKMKNKDRKPLVKPQEADVNKLNDLRRALAEIQMESNDISKFNVEERVNELFNEKKSLALKRLKELETKYKGFGIDFNVDEIMDSPKKNTGDVETEEDANYASLDPKTYQKKLDEINRITDQLLDIQTQTEHEIQVEEDGESDLSSSSSDDESEEIYQDASPTQELRSEHSELSSGSGPGSFLDALSQKYGTGQNVTASAAFGENNNGSGIGPLHSKVEKTFMNRLRKSTVSSAPYLEELTQKVNKVEPYEQNEDEGLDKKSLPENSTASAASAFDKAEKDMRQHVENGKQGRVVNHEEDKTADFSAVSKLNNTDGAEDLSTQSSVLSSQPPPPPPPPPPVPAKLFGESLEKEKKSEDDTVKQETTGDSPAPPPPPPPPPPPPMALFGKPKGETPPPPPLPSVLSSSTDGVIPPAPPMMPASQIKSAVTSPLLPQSPSLFEKYPRPHKKLKQLHWEKLDCTDNSIWGTGKAEKFADDLYEKGVLADLEKAFAAREIKSLASKRKEDLQKITFLSRDISQQFGINLHMYSSLSVADLVKKILNCDRDFLQTPSVVEFLSKSEIIEVSVNLARNYAPYSTDWEGVRNLEDAKPPEKDPNDLQRADQIYLQLMVNLESYWGSRMRALTVVTSYEREYNELLAKLRKVDKAVSALQESDNLRNVFNVILAVGNFMNDTSKQAQGFKLSTLQRLTFIKDTTNSMTFLNYVEKIVRLNYPSFNDFLSELEPVLDVVKVSIEQLVNDCKDFSQSIVNVERSVEIGNLSDSSKFHPLDKVLIKTLPVLPEARKKGDLLEDEVKLTIMEFESLMHTYGEDSGDKFAKISFFKKFADFINEYKKAQAQNLAAEEEERLYIKHKKIVEEQQKRAQEKEKQKENSNSPSSEGNEEDEAEDRRAVMDKLLEQLKNAGPAKSDPSSARKRALVRKKYLSEKDNAPQLLNDLDTEEGSILYSPEAMDPTADTVIHAESPTPLATRGVMNTSEDLPSPSKTSALEDQEEISDRARMLLKELRGSDTPVKQNSILDEHLEKLRARKERSIGEASTGNRLSFK</sequence>
<dbReference type="EMBL" id="L31766">
    <property type="protein sequence ID" value="AAA34455.1"/>
    <property type="molecule type" value="Genomic_DNA"/>
</dbReference>
<dbReference type="EMBL" id="D38411">
    <property type="protein sequence ID" value="BAA22512.1"/>
    <property type="molecule type" value="Genomic_DNA"/>
</dbReference>
<dbReference type="EMBL" id="Z71546">
    <property type="protein sequence ID" value="CAA96178.1"/>
    <property type="molecule type" value="Genomic_DNA"/>
</dbReference>
<dbReference type="EMBL" id="Z71547">
    <property type="protein sequence ID" value="CAA96179.1"/>
    <property type="molecule type" value="Genomic_DNA"/>
</dbReference>
<dbReference type="EMBL" id="X92494">
    <property type="protein sequence ID" value="CAA63225.1"/>
    <property type="molecule type" value="Genomic_DNA"/>
</dbReference>
<dbReference type="EMBL" id="BK006947">
    <property type="protein sequence ID" value="DAA10289.2"/>
    <property type="molecule type" value="Genomic_DNA"/>
</dbReference>
<dbReference type="PIR" id="S63244">
    <property type="entry name" value="S63244"/>
</dbReference>
<dbReference type="RefSeq" id="NP_014128.2">
    <property type="nucleotide sequence ID" value="NM_001183109.2"/>
</dbReference>
<dbReference type="PDB" id="1UX4">
    <property type="method" value="X-ray"/>
    <property type="resolution" value="3.30 A"/>
    <property type="chains" value="A/B=1352-1765"/>
</dbReference>
<dbReference type="PDB" id="1UX5">
    <property type="method" value="X-ray"/>
    <property type="resolution" value="2.50 A"/>
    <property type="chains" value="A=1350-1760"/>
</dbReference>
<dbReference type="PDB" id="1Y64">
    <property type="method" value="X-ray"/>
    <property type="resolution" value="3.05 A"/>
    <property type="chains" value="B=1327-1769"/>
</dbReference>
<dbReference type="PDBsum" id="1UX4"/>
<dbReference type="PDBsum" id="1UX5"/>
<dbReference type="PDBsum" id="1Y64"/>
<dbReference type="SMR" id="P41832"/>
<dbReference type="BioGRID" id="35569">
    <property type="interactions" value="506"/>
</dbReference>
<dbReference type="ComplexPortal" id="CPX-3188">
    <property type="entry name" value="Polarisome"/>
</dbReference>
<dbReference type="DIP" id="DIP-974N"/>
<dbReference type="FunCoup" id="P41832">
    <property type="interactions" value="637"/>
</dbReference>
<dbReference type="IntAct" id="P41832">
    <property type="interactions" value="68"/>
</dbReference>
<dbReference type="MINT" id="P41832"/>
<dbReference type="STRING" id="4932.YNL271C"/>
<dbReference type="GlyGen" id="P41832">
    <property type="glycosylation" value="4 sites, 1 O-linked glycan (4 sites)"/>
</dbReference>
<dbReference type="iPTMnet" id="P41832"/>
<dbReference type="PaxDb" id="4932-YNL271C"/>
<dbReference type="PeptideAtlas" id="P41832"/>
<dbReference type="EnsemblFungi" id="YNL271C_mRNA">
    <property type="protein sequence ID" value="YNL271C"/>
    <property type="gene ID" value="YNL271C"/>
</dbReference>
<dbReference type="GeneID" id="855450"/>
<dbReference type="KEGG" id="sce:YNL271C"/>
<dbReference type="AGR" id="SGD:S000005215"/>
<dbReference type="SGD" id="S000005215">
    <property type="gene designation" value="BNI1"/>
</dbReference>
<dbReference type="VEuPathDB" id="FungiDB:YNL271C"/>
<dbReference type="eggNOG" id="KOG1922">
    <property type="taxonomic scope" value="Eukaryota"/>
</dbReference>
<dbReference type="GeneTree" id="ENSGT00940000175034"/>
<dbReference type="HOGENOM" id="CLU_001313_1_0_1"/>
<dbReference type="InParanoid" id="P41832"/>
<dbReference type="OMA" id="QLEMTNF"/>
<dbReference type="OrthoDB" id="1104827at2759"/>
<dbReference type="BioCyc" id="YEAST:G3O-33265-MONOMER"/>
<dbReference type="BioGRID-ORCS" id="855450">
    <property type="hits" value="1 hit in 10 CRISPR screens"/>
</dbReference>
<dbReference type="EvolutionaryTrace" id="P41832"/>
<dbReference type="PRO" id="PR:P41832"/>
<dbReference type="Proteomes" id="UP000002311">
    <property type="component" value="Chromosome XIV"/>
</dbReference>
<dbReference type="RNAct" id="P41832">
    <property type="molecule type" value="protein"/>
</dbReference>
<dbReference type="GO" id="GO:0005884">
    <property type="term" value="C:actin filament"/>
    <property type="evidence" value="ECO:0000314"/>
    <property type="project" value="SGD"/>
</dbReference>
<dbReference type="GO" id="GO:0032153">
    <property type="term" value="C:cell division site"/>
    <property type="evidence" value="ECO:0000314"/>
    <property type="project" value="SGD"/>
</dbReference>
<dbReference type="GO" id="GO:0005935">
    <property type="term" value="C:cellular bud neck"/>
    <property type="evidence" value="ECO:0000314"/>
    <property type="project" value="SGD"/>
</dbReference>
<dbReference type="GO" id="GO:0005934">
    <property type="term" value="C:cellular bud tip"/>
    <property type="evidence" value="ECO:0000314"/>
    <property type="project" value="SGD"/>
</dbReference>
<dbReference type="GO" id="GO:0005829">
    <property type="term" value="C:cytosol"/>
    <property type="evidence" value="ECO:0000314"/>
    <property type="project" value="SGD"/>
</dbReference>
<dbReference type="GO" id="GO:0000131">
    <property type="term" value="C:incipient cellular bud site"/>
    <property type="evidence" value="ECO:0000314"/>
    <property type="project" value="SGD"/>
</dbReference>
<dbReference type="GO" id="GO:0043332">
    <property type="term" value="C:mating projection tip"/>
    <property type="evidence" value="ECO:0000314"/>
    <property type="project" value="SGD"/>
</dbReference>
<dbReference type="GO" id="GO:0110085">
    <property type="term" value="C:mitotic actomyosin contractile ring"/>
    <property type="evidence" value="ECO:0000318"/>
    <property type="project" value="GO_Central"/>
</dbReference>
<dbReference type="GO" id="GO:0005886">
    <property type="term" value="C:plasma membrane"/>
    <property type="evidence" value="ECO:0007005"/>
    <property type="project" value="SGD"/>
</dbReference>
<dbReference type="GO" id="GO:0000133">
    <property type="term" value="C:polarisome"/>
    <property type="evidence" value="ECO:0000314"/>
    <property type="project" value="SGD"/>
</dbReference>
<dbReference type="GO" id="GO:0005628">
    <property type="term" value="C:prospore membrane"/>
    <property type="evidence" value="ECO:0007005"/>
    <property type="project" value="SGD"/>
</dbReference>
<dbReference type="GO" id="GO:0051015">
    <property type="term" value="F:actin filament binding"/>
    <property type="evidence" value="ECO:0000318"/>
    <property type="project" value="GO_Central"/>
</dbReference>
<dbReference type="GO" id="GO:0042802">
    <property type="term" value="F:identical protein binding"/>
    <property type="evidence" value="ECO:0000353"/>
    <property type="project" value="IntAct"/>
</dbReference>
<dbReference type="GO" id="GO:0005522">
    <property type="term" value="F:profilin binding"/>
    <property type="evidence" value="ECO:0000314"/>
    <property type="project" value="SGD"/>
</dbReference>
<dbReference type="GO" id="GO:0031267">
    <property type="term" value="F:small GTPase binding"/>
    <property type="evidence" value="ECO:0007669"/>
    <property type="project" value="InterPro"/>
</dbReference>
<dbReference type="GO" id="GO:0051017">
    <property type="term" value="P:actin filament bundle assembly"/>
    <property type="evidence" value="ECO:0000315"/>
    <property type="project" value="SGD"/>
</dbReference>
<dbReference type="GO" id="GO:0045010">
    <property type="term" value="P:actin nucleation"/>
    <property type="evidence" value="ECO:0000314"/>
    <property type="project" value="SGD"/>
</dbReference>
<dbReference type="GO" id="GO:0051016">
    <property type="term" value="P:barbed-end actin filament capping"/>
    <property type="evidence" value="ECO:0000314"/>
    <property type="project" value="SGD"/>
</dbReference>
<dbReference type="GO" id="GO:0007118">
    <property type="term" value="P:budding cell apical bud growth"/>
    <property type="evidence" value="ECO:0000315"/>
    <property type="project" value="SGD"/>
</dbReference>
<dbReference type="GO" id="GO:0071474">
    <property type="term" value="P:cellular hyperosmotic response"/>
    <property type="evidence" value="ECO:0000315"/>
    <property type="project" value="SGD"/>
</dbReference>
<dbReference type="GO" id="GO:0030010">
    <property type="term" value="P:establishment of cell polarity"/>
    <property type="evidence" value="ECO:0000303"/>
    <property type="project" value="ComplexPortal"/>
</dbReference>
<dbReference type="GO" id="GO:0000132">
    <property type="term" value="P:establishment of mitotic spindle orientation"/>
    <property type="evidence" value="ECO:0000315"/>
    <property type="project" value="SGD"/>
</dbReference>
<dbReference type="GO" id="GO:0030950">
    <property type="term" value="P:establishment or maintenance of actin cytoskeleton polarity"/>
    <property type="evidence" value="ECO:0000303"/>
    <property type="project" value="ComplexPortal"/>
</dbReference>
<dbReference type="GO" id="GO:0070649">
    <property type="term" value="P:formin-nucleated actin cable assembly"/>
    <property type="evidence" value="ECO:0000314"/>
    <property type="project" value="SGD"/>
</dbReference>
<dbReference type="GO" id="GO:1903475">
    <property type="term" value="P:mitotic actomyosin contractile ring assembly"/>
    <property type="evidence" value="ECO:0000316"/>
    <property type="project" value="SGD"/>
</dbReference>
<dbReference type="GO" id="GO:0032956">
    <property type="term" value="P:regulation of actin cytoskeleton organization"/>
    <property type="evidence" value="ECO:0000315"/>
    <property type="project" value="SGD"/>
</dbReference>
<dbReference type="GO" id="GO:0032880">
    <property type="term" value="P:regulation of protein localization"/>
    <property type="evidence" value="ECO:0000315"/>
    <property type="project" value="SGD"/>
</dbReference>
<dbReference type="GO" id="GO:0006903">
    <property type="term" value="P:vesicle targeting"/>
    <property type="evidence" value="ECO:0000303"/>
    <property type="project" value="ComplexPortal"/>
</dbReference>
<dbReference type="FunFam" id="1.10.238.150:FF:000005">
    <property type="entry name" value="BNI1p Formin"/>
    <property type="match status" value="1"/>
</dbReference>
<dbReference type="FunFam" id="1.20.58.2220:FF:000006">
    <property type="entry name" value="Cytokinesis protein sepA"/>
    <property type="match status" value="1"/>
</dbReference>
<dbReference type="FunFam" id="6.10.30.50:FF:000001">
    <property type="entry name" value="Cytokinesis sepA protein"/>
    <property type="match status" value="1"/>
</dbReference>
<dbReference type="Gene3D" id="6.10.30.50">
    <property type="match status" value="1"/>
</dbReference>
<dbReference type="Gene3D" id="1.20.58.2220">
    <property type="entry name" value="Formin, FH2 domain"/>
    <property type="match status" value="1"/>
</dbReference>
<dbReference type="Gene3D" id="1.10.238.150">
    <property type="entry name" value="Formin, FH3 diaphanous domain"/>
    <property type="match status" value="1"/>
</dbReference>
<dbReference type="Gene3D" id="1.25.10.10">
    <property type="entry name" value="Leucine-rich Repeat Variant"/>
    <property type="match status" value="1"/>
</dbReference>
<dbReference type="InterPro" id="IPR051661">
    <property type="entry name" value="Actin_filament_regulator"/>
</dbReference>
<dbReference type="InterPro" id="IPR011989">
    <property type="entry name" value="ARM-like"/>
</dbReference>
<dbReference type="InterPro" id="IPR016024">
    <property type="entry name" value="ARM-type_fold"/>
</dbReference>
<dbReference type="InterPro" id="IPR014767">
    <property type="entry name" value="DAD_dom"/>
</dbReference>
<dbReference type="InterPro" id="IPR015425">
    <property type="entry name" value="FH2_Formin"/>
</dbReference>
<dbReference type="InterPro" id="IPR042201">
    <property type="entry name" value="FH2_Formin_sf"/>
</dbReference>
<dbReference type="InterPro" id="IPR010472">
    <property type="entry name" value="FH3_dom"/>
</dbReference>
<dbReference type="InterPro" id="IPR014768">
    <property type="entry name" value="GBD/FH3_dom"/>
</dbReference>
<dbReference type="InterPro" id="IPR010473">
    <property type="entry name" value="GTPase-bd"/>
</dbReference>
<dbReference type="PANTHER" id="PTHR47102">
    <property type="entry name" value="PROTEIN BNI1"/>
    <property type="match status" value="1"/>
</dbReference>
<dbReference type="PANTHER" id="PTHR47102:SF2">
    <property type="entry name" value="PROTEIN BNI1"/>
    <property type="match status" value="1"/>
</dbReference>
<dbReference type="Pfam" id="PF06367">
    <property type="entry name" value="Drf_FH3"/>
    <property type="match status" value="1"/>
</dbReference>
<dbReference type="Pfam" id="PF06371">
    <property type="entry name" value="Drf_GBD"/>
    <property type="match status" value="1"/>
</dbReference>
<dbReference type="Pfam" id="PF02181">
    <property type="entry name" value="FH2"/>
    <property type="match status" value="1"/>
</dbReference>
<dbReference type="SMART" id="SM01139">
    <property type="entry name" value="Drf_FH3"/>
    <property type="match status" value="1"/>
</dbReference>
<dbReference type="SMART" id="SM01140">
    <property type="entry name" value="Drf_GBD"/>
    <property type="match status" value="1"/>
</dbReference>
<dbReference type="SMART" id="SM00498">
    <property type="entry name" value="FH2"/>
    <property type="match status" value="1"/>
</dbReference>
<dbReference type="SUPFAM" id="SSF48371">
    <property type="entry name" value="ARM repeat"/>
    <property type="match status" value="1"/>
</dbReference>
<dbReference type="SUPFAM" id="SSF101447">
    <property type="entry name" value="Formin homology 2 domain (FH2 domain)"/>
    <property type="match status" value="1"/>
</dbReference>
<dbReference type="PROSITE" id="PS51231">
    <property type="entry name" value="DAD"/>
    <property type="match status" value="1"/>
</dbReference>
<dbReference type="PROSITE" id="PS51444">
    <property type="entry name" value="FH2"/>
    <property type="match status" value="1"/>
</dbReference>
<dbReference type="PROSITE" id="PS51232">
    <property type="entry name" value="GBD_FH3"/>
    <property type="match status" value="1"/>
</dbReference>
<proteinExistence type="evidence at protein level"/>